<reference key="1">
    <citation type="journal article" date="2013" name="BMC Microbiol.">
        <title>Conservation of the genes for HC-toxin biosynthesis in Alternaria jesenskae.</title>
        <authorList>
            <person name="Wight W.D."/>
            <person name="Labuda R."/>
            <person name="Walton J.D."/>
        </authorList>
    </citation>
    <scope>NUCLEOTIDE SEQUENCE [GENOMIC DNA]</scope>
    <scope>FUNCTION</scope>
    <scope>PATHWAY</scope>
    <source>
        <strain>ATCC 90305 / SB111 / 2R15</strain>
    </source>
</reference>
<keyword id="KW-0275">Fatty acid biosynthesis</keyword>
<keyword id="KW-0276">Fatty acid metabolism</keyword>
<keyword id="KW-0444">Lipid biosynthesis</keyword>
<keyword id="KW-0443">Lipid metabolism</keyword>
<keyword id="KW-0511">Multifunctional enzyme</keyword>
<keyword id="KW-0521">NADP</keyword>
<keyword id="KW-0560">Oxidoreductase</keyword>
<keyword id="KW-0596">Phosphopantetheine</keyword>
<keyword id="KW-0597">Phosphoprotein</keyword>
<keyword id="KW-0808">Transferase</keyword>
<organism>
    <name type="scientific">Cochliobolus carbonum</name>
    <name type="common">Maize leaf spot fungus</name>
    <name type="synonym">Bipolaris zeicola</name>
    <dbReference type="NCBI Taxonomy" id="5017"/>
    <lineage>
        <taxon>Eukaryota</taxon>
        <taxon>Fungi</taxon>
        <taxon>Dikarya</taxon>
        <taxon>Ascomycota</taxon>
        <taxon>Pezizomycotina</taxon>
        <taxon>Dothideomycetes</taxon>
        <taxon>Pleosporomycetidae</taxon>
        <taxon>Pleosporales</taxon>
        <taxon>Pleosporineae</taxon>
        <taxon>Pleosporaceae</taxon>
        <taxon>Bipolaris</taxon>
    </lineage>
</organism>
<feature type="chain" id="PRO_0000458265" description="Fatty acid synthase subunit alpha">
    <location>
        <begin position="1"/>
        <end position="1547"/>
    </location>
</feature>
<feature type="domain" description="Carrier" evidence="3">
    <location>
        <begin position="145"/>
        <end position="221"/>
    </location>
</feature>
<feature type="domain" description="Ketosynthase family 3 (KS3)" evidence="4">
    <location>
        <begin position="1004"/>
        <end position="1476"/>
    </location>
</feature>
<feature type="region of interest" description="Disordered" evidence="6">
    <location>
        <begin position="94"/>
        <end position="121"/>
    </location>
</feature>
<feature type="region of interest" description="Ketoreductase (KR) domain" evidence="1">
    <location>
        <begin position="563"/>
        <end position="798"/>
    </location>
</feature>
<feature type="compositionally biased region" description="Polar residues" evidence="6">
    <location>
        <begin position="109"/>
        <end position="118"/>
    </location>
</feature>
<feature type="active site" description="For beta-ketoacyl synthase activity" evidence="4">
    <location>
        <position position="1190"/>
    </location>
</feature>
<feature type="active site" description="For beta-ketoacyl synthase activity" evidence="4">
    <location>
        <position position="1442"/>
    </location>
</feature>
<feature type="modified residue" description="O-(pantetheine 4'-phosphoryl)serine" evidence="3">
    <location>
        <position position="180"/>
    </location>
</feature>
<accession>S5NIA2</accession>
<name>TOXH_COCCA</name>
<sequence>MEMLTIDDRSHQFAYPVRWIETQHHILSELDSERVVEVGPANILTNMMKKTWEQQFANIDQALGIERKFFGPRDVFFPPNRENMDMLRAASKKTLPEAHPPPPIDSHQEPSTQTQATHRSAGVPVSLPQQIATNIPPAILEDVSLPVSTIVRSLVAMKLRKRSDDISEDQTINRLVGGRSTLMNEILGDLHAEFPGHVPERPDDIPIKDLGETMSIGHNGRLGKCTASLVNKMISSKMPGNWGQSSVRQFLQQKWGLAPMRQDAFLLLAVEKQPATRLSTPDSVDQFLVDIATEYFKKEGMSIPQATQQENSSQDSTARIVDVQGLRTAAVVDTAMVKDIIEVLKGYSNQQGNALEATMPHHTIDASHNASEPVDLWLTEHGDEYAAGIQPMFDGQKERLYDSYWNWIHQDITELVTLSRADDSDSYPGLVGLTMRILNKICDRSLDHLSYAITQAKISGSRNPIHIQTLQSVYESSLIFKAKNPIFLNRTGGDTTARYTGHDGLVSSLMKHVYDGFIPKDTLPLDIPVGKLTGQGFVISPTHTKMFATDVDRSRVLGLTFVGKNVLITGAGKNSIGLGILRHLLSGGARVIVTTSSYTSKTTRMYQELYAKHGSRGSILRLIPFNQGSWHDVQGLTEWIYKDESWDLDFIIPFAAVPERGRSLENLDSGSELAHRVMLTNLLRLLGGISRNKRSRGIVTRPATVLLPFSPNHGILGNDGLYSESKVSLEILLNKWASESWADFLSLMGVIIGWTRGTGLMAENDEIADAVEKLGAKTFSSDEMAGYIATLMGGTITTECQKEPLVVDLGGGLSRIQNLKGQLADARKALRESAELQRAVAEANLRQSISISGETSRKTSSSTTLHPRISLKLSWPQLPDYNQDISPLSDSLLDMLDLSRVVVITGFSELGPHGNSRTRWELERNGTLSPEGCAELAWMMGLIQHHSGISKDGSPFSGWMDSTTKELVEDFDILSRYESRVLKHTGIRKIEPDICDSGYDPERKESLQEIVLQRDLPAFESTAEVADDMMRKHGDRVAVTNGTSDGMRLVQLKAGAVIWVPRASRFNRTVAGQIPSGWSAKRYGISDEIIEQVDPVTLFSLVCTVEALLSSGITDPYEWYQHIHISELGNCIGSSMGGLSSLKKMHRDRYLDRPVKGDILQETFINTTAAWINMLLFSSAGPIKTPVGACATSLESLDTGRDLIVAKKAKIVLVGGVEDFVEDVSYEFGSMKATCDTEAEIRHGRSPDEMSRPMASSRAGFVEAQGCGIQVLTSAELALKMGLPIYGIVAYTNMSADKIGRSVPAAGRGVLTNAREPAHIRGPETTYNVLSRSLLNLTHRRQMLQERRSQISAFVTDSNRLLDEEIANLEQNSDFTQEDITRFRLQQLRFIHEEASRQEADAAFALGNEFWKSGSNQAVSPIRGSLAAWGLDVDDICVASLHGKTLQVEGDHSCIKACSVTSFGFGQKGSQAILIHPRYLFATISKTQYEEYIAKNSIRLKRASQTYSEGIINGDLVSKFIKEHQPYPAQDEEAWLLNPAMRLKNFS</sequence>
<gene>
    <name evidence="8" type="primary">TOXH</name>
</gene>
<evidence type="ECO:0000250" key="1">
    <source>
        <dbReference type="UniProtKB" id="Q8TGA2"/>
    </source>
</evidence>
<evidence type="ECO:0000250" key="2">
    <source>
        <dbReference type="UniProtKB" id="Q92215"/>
    </source>
</evidence>
<evidence type="ECO:0000255" key="3">
    <source>
        <dbReference type="PROSITE-ProRule" id="PRU00258"/>
    </source>
</evidence>
<evidence type="ECO:0000255" key="4">
    <source>
        <dbReference type="PROSITE-ProRule" id="PRU01348"/>
    </source>
</evidence>
<evidence type="ECO:0000255" key="5">
    <source>
        <dbReference type="PROSITE-ProRule" id="PRU10022"/>
    </source>
</evidence>
<evidence type="ECO:0000256" key="6">
    <source>
        <dbReference type="SAM" id="MobiDB-lite"/>
    </source>
</evidence>
<evidence type="ECO:0000269" key="7">
    <source>
    </source>
</evidence>
<evidence type="ECO:0000303" key="8">
    <source>
    </source>
</evidence>
<evidence type="ECO:0000305" key="9"/>
<evidence type="ECO:0000305" key="10">
    <source>
    </source>
</evidence>
<comment type="function">
    <text evidence="7 10">Fatty acid synthase alpha subunit, part of the diffuse TOX2 gene cluster that mediates the biosynthesis of the HC-toxin, cyclic tetrapeptide of structure cyclo(D-Pro-L-Ala-D-Ala-L-Aeo), where Aeo stands for 2-amino-9,10-epoxi-8-oxodecanoic acid (PubMed:23865912). HC-toxin is a determinant of specificity and virulence in the interaction between the producing fungus and its host, maize (PubMed:23865912). TOXH contribute to the synthesis of the decanoic backbone of 2-amino-9,10-epoxi-8-oxodecanoic acid, an essential precursor for the production of the major forms of HC-toxin by the non-ribosomal peptide synthetase HTS1 (Probable).</text>
</comment>
<comment type="catalytic activity">
    <reaction evidence="1">
        <text>acetyl-CoA + n malonyl-CoA + 2n NADPH + 4n H(+) = a long-chain-acyl-CoA + n CoA + n CO2 + 2n NADP(+).</text>
        <dbReference type="EC" id="2.3.1.86"/>
    </reaction>
</comment>
<comment type="catalytic activity">
    <reaction evidence="5">
        <text>a fatty acyl-[ACP] + malonyl-[ACP] + H(+) = a 3-oxoacyl-[ACP] + holo-[ACP] + CO2</text>
        <dbReference type="Rhea" id="RHEA:22836"/>
        <dbReference type="Rhea" id="RHEA-COMP:9623"/>
        <dbReference type="Rhea" id="RHEA-COMP:9685"/>
        <dbReference type="Rhea" id="RHEA-COMP:9916"/>
        <dbReference type="Rhea" id="RHEA-COMP:14125"/>
        <dbReference type="ChEBI" id="CHEBI:15378"/>
        <dbReference type="ChEBI" id="CHEBI:16526"/>
        <dbReference type="ChEBI" id="CHEBI:64479"/>
        <dbReference type="ChEBI" id="CHEBI:78449"/>
        <dbReference type="ChEBI" id="CHEBI:78776"/>
        <dbReference type="ChEBI" id="CHEBI:138651"/>
        <dbReference type="EC" id="2.3.1.41"/>
    </reaction>
</comment>
<comment type="catalytic activity">
    <reaction evidence="1">
        <text>a (3R)-hydroxyacyl-[ACP] + NADP(+) = a 3-oxoacyl-[ACP] + NADPH + H(+)</text>
        <dbReference type="Rhea" id="RHEA:17397"/>
        <dbReference type="Rhea" id="RHEA-COMP:9916"/>
        <dbReference type="Rhea" id="RHEA-COMP:9945"/>
        <dbReference type="ChEBI" id="CHEBI:15378"/>
        <dbReference type="ChEBI" id="CHEBI:57783"/>
        <dbReference type="ChEBI" id="CHEBI:58349"/>
        <dbReference type="ChEBI" id="CHEBI:78776"/>
        <dbReference type="ChEBI" id="CHEBI:78827"/>
        <dbReference type="EC" id="1.1.1.100"/>
    </reaction>
</comment>
<comment type="cofactor">
    <cofactor evidence="3">
        <name>pantetheine 4'-phosphate</name>
        <dbReference type="ChEBI" id="CHEBI:47942"/>
    </cofactor>
</comment>
<comment type="pathway">
    <text evidence="10">Mycotoxin biosynthesis; HC-toxin biosynthesis.</text>
</comment>
<comment type="miscellaneous">
    <text evidence="2">The genes involved in HC-toxin biosynthesis, called collectively TOX2, are organized into a diffuse cluster that spans &gt;500 kb. All of the known genes are duplicated or triplicated within this region, with some variation in copy number and chromosomal location among different race 1 strains.</text>
</comment>
<comment type="similarity">
    <text evidence="9">Belongs to the thiolase-like superfamily. Fungal fatty acid synthetase subunit alpha family.</text>
</comment>
<dbReference type="EC" id="2.3.1.86" evidence="10"/>
<dbReference type="EC" id="1.1.1.100" evidence="1"/>
<dbReference type="EC" id="2.3.1.41" evidence="1"/>
<dbReference type="EMBL" id="KC866372">
    <property type="protein sequence ID" value="AGR67369.1"/>
    <property type="molecule type" value="Genomic_DNA"/>
</dbReference>
<dbReference type="SMR" id="S5NIA2"/>
<dbReference type="UniPathway" id="UPA00874"/>
<dbReference type="GO" id="GO:0005835">
    <property type="term" value="C:fatty acid synthase complex"/>
    <property type="evidence" value="ECO:0007669"/>
    <property type="project" value="InterPro"/>
</dbReference>
<dbReference type="GO" id="GO:0004316">
    <property type="term" value="F:3-oxoacyl-[acyl-carrier-protein] reductase (NADPH) activity"/>
    <property type="evidence" value="ECO:0007669"/>
    <property type="project" value="InterPro"/>
</dbReference>
<dbReference type="GO" id="GO:0004315">
    <property type="term" value="F:3-oxoacyl-[acyl-carrier-protein] synthase activity"/>
    <property type="evidence" value="ECO:0007669"/>
    <property type="project" value="UniProtKB-EC"/>
</dbReference>
<dbReference type="GO" id="GO:0004312">
    <property type="term" value="F:fatty acid synthase activity"/>
    <property type="evidence" value="ECO:0007669"/>
    <property type="project" value="InterPro"/>
</dbReference>
<dbReference type="GO" id="GO:0008897">
    <property type="term" value="F:holo-[acyl-carrier-protein] synthase activity"/>
    <property type="evidence" value="ECO:0007669"/>
    <property type="project" value="InterPro"/>
</dbReference>
<dbReference type="GO" id="GO:0042759">
    <property type="term" value="P:long-chain fatty acid biosynthetic process"/>
    <property type="evidence" value="ECO:0007669"/>
    <property type="project" value="InterPro"/>
</dbReference>
<dbReference type="CDD" id="cd00828">
    <property type="entry name" value="elong_cond_enzymes"/>
    <property type="match status" value="1"/>
</dbReference>
<dbReference type="CDD" id="cd08950">
    <property type="entry name" value="KR_fFAS_SDR_c_like"/>
    <property type="match status" value="1"/>
</dbReference>
<dbReference type="Gene3D" id="3.30.70.2490">
    <property type="match status" value="1"/>
</dbReference>
<dbReference type="Gene3D" id="3.40.47.10">
    <property type="match status" value="2"/>
</dbReference>
<dbReference type="Gene3D" id="3.90.25.70">
    <property type="match status" value="1"/>
</dbReference>
<dbReference type="Gene3D" id="6.10.140.1410">
    <property type="match status" value="1"/>
</dbReference>
<dbReference type="Gene3D" id="3.40.50.720">
    <property type="entry name" value="NAD(P)-binding Rossmann-like Domain"/>
    <property type="match status" value="2"/>
</dbReference>
<dbReference type="InterPro" id="IPR016035">
    <property type="entry name" value="Acyl_Trfase/lysoPLipase"/>
</dbReference>
<dbReference type="InterPro" id="IPR040899">
    <property type="entry name" value="Fas_alpha_ACP"/>
</dbReference>
<dbReference type="InterPro" id="IPR047224">
    <property type="entry name" value="FAS_alpha_su_C"/>
</dbReference>
<dbReference type="InterPro" id="IPR026025">
    <property type="entry name" value="FAS_alpha_yeast"/>
</dbReference>
<dbReference type="InterPro" id="IPR041550">
    <property type="entry name" value="FASI_helical"/>
</dbReference>
<dbReference type="InterPro" id="IPR050830">
    <property type="entry name" value="Fungal_FAS"/>
</dbReference>
<dbReference type="InterPro" id="IPR018201">
    <property type="entry name" value="Ketoacyl_synth_AS"/>
</dbReference>
<dbReference type="InterPro" id="IPR014030">
    <property type="entry name" value="Ketoacyl_synth_N"/>
</dbReference>
<dbReference type="InterPro" id="IPR036291">
    <property type="entry name" value="NAD(P)-bd_dom_sf"/>
</dbReference>
<dbReference type="InterPro" id="IPR020841">
    <property type="entry name" value="PKS_Beta-ketoAc_synthase_dom"/>
</dbReference>
<dbReference type="InterPro" id="IPR009081">
    <property type="entry name" value="PP-bd_ACP"/>
</dbReference>
<dbReference type="InterPro" id="IPR016039">
    <property type="entry name" value="Thiolase-like"/>
</dbReference>
<dbReference type="PANTHER" id="PTHR10982:SF21">
    <property type="entry name" value="FATTY ACID SYNTHASE SUBUNIT BETA"/>
    <property type="match status" value="1"/>
</dbReference>
<dbReference type="PANTHER" id="PTHR10982">
    <property type="entry name" value="MALONYL COA-ACYL CARRIER PROTEIN TRANSACYLASE"/>
    <property type="match status" value="1"/>
</dbReference>
<dbReference type="Pfam" id="PF18325">
    <property type="entry name" value="Fas_alpha_ACP"/>
    <property type="match status" value="1"/>
</dbReference>
<dbReference type="Pfam" id="PF18314">
    <property type="entry name" value="FAS_I_H"/>
    <property type="match status" value="1"/>
</dbReference>
<dbReference type="Pfam" id="PF00109">
    <property type="entry name" value="ketoacyl-synt"/>
    <property type="match status" value="1"/>
</dbReference>
<dbReference type="PIRSF" id="PIRSF000454">
    <property type="entry name" value="FAS_yeast_alpha"/>
    <property type="match status" value="1"/>
</dbReference>
<dbReference type="SUPFAM" id="SSF52151">
    <property type="entry name" value="FabD/lysophospholipase-like"/>
    <property type="match status" value="1"/>
</dbReference>
<dbReference type="SUPFAM" id="SSF51735">
    <property type="entry name" value="NAD(P)-binding Rossmann-fold domains"/>
    <property type="match status" value="1"/>
</dbReference>
<dbReference type="SUPFAM" id="SSF53901">
    <property type="entry name" value="Thiolase-like"/>
    <property type="match status" value="2"/>
</dbReference>
<dbReference type="PROSITE" id="PS50075">
    <property type="entry name" value="CARRIER"/>
    <property type="match status" value="1"/>
</dbReference>
<dbReference type="PROSITE" id="PS00606">
    <property type="entry name" value="KS3_1"/>
    <property type="match status" value="1"/>
</dbReference>
<dbReference type="PROSITE" id="PS52004">
    <property type="entry name" value="KS3_2"/>
    <property type="match status" value="1"/>
</dbReference>
<protein>
    <recommendedName>
        <fullName evidence="8">Fatty acid synthase subunit alpha</fullName>
        <ecNumber evidence="10">2.3.1.86</ecNumber>
    </recommendedName>
    <alternativeName>
        <fullName evidence="8">TOX2 HC-toxin biosynthesis cluster protein TOXH</fullName>
    </alternativeName>
    <domain>
        <recommendedName>
            <fullName evidence="1">3-oxoacyl-[acyl-carrier-protein] reductase</fullName>
            <ecNumber evidence="1">1.1.1.100</ecNumber>
        </recommendedName>
        <alternativeName>
            <fullName evidence="1">Beta-ketoacyl reductase</fullName>
        </alternativeName>
    </domain>
    <domain>
        <recommendedName>
            <fullName evidence="1">3-oxoacyl-[acyl-carrier-protein] synthase</fullName>
            <ecNumber evidence="1">2.3.1.41</ecNumber>
        </recommendedName>
    </domain>
</protein>
<proteinExistence type="inferred from homology"/>